<protein>
    <recommendedName>
        <fullName evidence="1">Putative N-acetylmannosamine-6-phosphate 2-epimerase</fullName>
        <ecNumber evidence="1">5.1.3.9</ecNumber>
    </recommendedName>
    <alternativeName>
        <fullName evidence="1">ManNAc-6-P epimerase</fullName>
    </alternativeName>
</protein>
<name>NANE_STRSV</name>
<reference key="1">
    <citation type="journal article" date="2007" name="J. Bacteriol.">
        <title>Genome of the opportunistic pathogen Streptococcus sanguinis.</title>
        <authorList>
            <person name="Xu P."/>
            <person name="Alves J.M."/>
            <person name="Kitten T."/>
            <person name="Brown A."/>
            <person name="Chen Z."/>
            <person name="Ozaki L.S."/>
            <person name="Manque P."/>
            <person name="Ge X."/>
            <person name="Serrano M.G."/>
            <person name="Puiu D."/>
            <person name="Hendricks S."/>
            <person name="Wang Y."/>
            <person name="Chaplin M.D."/>
            <person name="Akan D."/>
            <person name="Paik S."/>
            <person name="Peterson D.L."/>
            <person name="Macrina F.L."/>
            <person name="Buck G.A."/>
        </authorList>
    </citation>
    <scope>NUCLEOTIDE SEQUENCE [LARGE SCALE GENOMIC DNA]</scope>
    <source>
        <strain>SK36</strain>
    </source>
</reference>
<comment type="function">
    <text evidence="1">Converts N-acetylmannosamine-6-phosphate (ManNAc-6-P) to N-acetylglucosamine-6-phosphate (GlcNAc-6-P).</text>
</comment>
<comment type="catalytic activity">
    <reaction evidence="1">
        <text>an N-acyl-D-glucosamine 6-phosphate = an N-acyl-D-mannosamine 6-phosphate</text>
        <dbReference type="Rhea" id="RHEA:23932"/>
        <dbReference type="ChEBI" id="CHEBI:57599"/>
        <dbReference type="ChEBI" id="CHEBI:57666"/>
        <dbReference type="EC" id="5.1.3.9"/>
    </reaction>
</comment>
<comment type="pathway">
    <text evidence="1">Amino-sugar metabolism; N-acetylneuraminate degradation; D-fructose 6-phosphate from N-acetylneuraminate: step 3/5.</text>
</comment>
<comment type="similarity">
    <text evidence="1">Belongs to the NanE family.</text>
</comment>
<gene>
    <name evidence="1" type="primary">nanE</name>
    <name type="ordered locus">SSA_0071</name>
</gene>
<organism>
    <name type="scientific">Streptococcus sanguinis (strain SK36)</name>
    <dbReference type="NCBI Taxonomy" id="388919"/>
    <lineage>
        <taxon>Bacteria</taxon>
        <taxon>Bacillati</taxon>
        <taxon>Bacillota</taxon>
        <taxon>Bacilli</taxon>
        <taxon>Lactobacillales</taxon>
        <taxon>Streptococcaceae</taxon>
        <taxon>Streptococcus</taxon>
    </lineage>
</organism>
<accession>A3CK30</accession>
<dbReference type="EC" id="5.1.3.9" evidence="1"/>
<dbReference type="EMBL" id="CP000387">
    <property type="protein sequence ID" value="ABN43535.1"/>
    <property type="molecule type" value="Genomic_DNA"/>
</dbReference>
<dbReference type="RefSeq" id="WP_011836315.1">
    <property type="nucleotide sequence ID" value="NC_009009.1"/>
</dbReference>
<dbReference type="RefSeq" id="YP_001034085.1">
    <property type="nucleotide sequence ID" value="NC_009009.1"/>
</dbReference>
<dbReference type="SMR" id="A3CK30"/>
<dbReference type="STRING" id="388919.SSA_0071"/>
<dbReference type="KEGG" id="ssa:SSA_0071"/>
<dbReference type="PATRIC" id="fig|388919.9.peg.67"/>
<dbReference type="eggNOG" id="COG3010">
    <property type="taxonomic scope" value="Bacteria"/>
</dbReference>
<dbReference type="HOGENOM" id="CLU_086300_1_0_9"/>
<dbReference type="OrthoDB" id="9781704at2"/>
<dbReference type="UniPathway" id="UPA00629">
    <property type="reaction ID" value="UER00682"/>
</dbReference>
<dbReference type="Proteomes" id="UP000002148">
    <property type="component" value="Chromosome"/>
</dbReference>
<dbReference type="GO" id="GO:0005829">
    <property type="term" value="C:cytosol"/>
    <property type="evidence" value="ECO:0007669"/>
    <property type="project" value="TreeGrafter"/>
</dbReference>
<dbReference type="GO" id="GO:0047465">
    <property type="term" value="F:N-acylglucosamine-6-phosphate 2-epimerase activity"/>
    <property type="evidence" value="ECO:0007669"/>
    <property type="project" value="UniProtKB-EC"/>
</dbReference>
<dbReference type="GO" id="GO:0005975">
    <property type="term" value="P:carbohydrate metabolic process"/>
    <property type="evidence" value="ECO:0007669"/>
    <property type="project" value="UniProtKB-UniRule"/>
</dbReference>
<dbReference type="GO" id="GO:0006053">
    <property type="term" value="P:N-acetylmannosamine catabolic process"/>
    <property type="evidence" value="ECO:0007669"/>
    <property type="project" value="TreeGrafter"/>
</dbReference>
<dbReference type="GO" id="GO:0019262">
    <property type="term" value="P:N-acetylneuraminate catabolic process"/>
    <property type="evidence" value="ECO:0007669"/>
    <property type="project" value="UniProtKB-UniRule"/>
</dbReference>
<dbReference type="CDD" id="cd04729">
    <property type="entry name" value="NanE"/>
    <property type="match status" value="1"/>
</dbReference>
<dbReference type="FunFam" id="3.20.20.70:FF:000035">
    <property type="entry name" value="Putative N-acetylmannosamine-6-phosphate 2-epimerase"/>
    <property type="match status" value="1"/>
</dbReference>
<dbReference type="Gene3D" id="3.20.20.70">
    <property type="entry name" value="Aldolase class I"/>
    <property type="match status" value="1"/>
</dbReference>
<dbReference type="HAMAP" id="MF_01235">
    <property type="entry name" value="ManNAc6P_epimer"/>
    <property type="match status" value="1"/>
</dbReference>
<dbReference type="InterPro" id="IPR013785">
    <property type="entry name" value="Aldolase_TIM"/>
</dbReference>
<dbReference type="InterPro" id="IPR007260">
    <property type="entry name" value="NanE"/>
</dbReference>
<dbReference type="InterPro" id="IPR011060">
    <property type="entry name" value="RibuloseP-bd_barrel"/>
</dbReference>
<dbReference type="NCBIfam" id="NF002231">
    <property type="entry name" value="PRK01130.1"/>
    <property type="match status" value="1"/>
</dbReference>
<dbReference type="PANTHER" id="PTHR36204">
    <property type="entry name" value="N-ACETYLMANNOSAMINE-6-PHOSPHATE 2-EPIMERASE-RELATED"/>
    <property type="match status" value="1"/>
</dbReference>
<dbReference type="PANTHER" id="PTHR36204:SF1">
    <property type="entry name" value="N-ACETYLMANNOSAMINE-6-PHOSPHATE 2-EPIMERASE-RELATED"/>
    <property type="match status" value="1"/>
</dbReference>
<dbReference type="Pfam" id="PF04131">
    <property type="entry name" value="NanE"/>
    <property type="match status" value="1"/>
</dbReference>
<dbReference type="SUPFAM" id="SSF51366">
    <property type="entry name" value="Ribulose-phoshate binding barrel"/>
    <property type="match status" value="1"/>
</dbReference>
<feature type="chain" id="PRO_0000301496" description="Putative N-acetylmannosamine-6-phosphate 2-epimerase">
    <location>
        <begin position="1"/>
        <end position="232"/>
    </location>
</feature>
<evidence type="ECO:0000255" key="1">
    <source>
        <dbReference type="HAMAP-Rule" id="MF_01235"/>
    </source>
</evidence>
<keyword id="KW-0119">Carbohydrate metabolism</keyword>
<keyword id="KW-0413">Isomerase</keyword>
<keyword id="KW-1185">Reference proteome</keyword>
<sequence>MSQILKDDLIAKIKDGIIVSCQALPQEPLYTEAGGVIPLLVKAAEQGGAVGIRANSVRDIREIKEVTSLPIIGIIKRDYPPQEPFITATMREVDELAALDIEVIALDCTKRERHDGLTVADFIKQVKVKYPHQLLMADISTYEEAAAAVEAGVDFVGTTLSGYTSYSPKVDGPDIELIRRLCQAGFDVIAEGKIHYPSQAKQIHDLGVRGIVVGGAITRPKEITERFVAGLK</sequence>
<proteinExistence type="inferred from homology"/>